<protein>
    <recommendedName>
        <fullName evidence="1">Small ribosomal subunit protein uS3</fullName>
    </recommendedName>
    <alternativeName>
        <fullName evidence="2">30S ribosomal protein S3</fullName>
    </alternativeName>
</protein>
<evidence type="ECO:0000255" key="1">
    <source>
        <dbReference type="HAMAP-Rule" id="MF_01309"/>
    </source>
</evidence>
<evidence type="ECO:0000305" key="2"/>
<gene>
    <name evidence="1" type="primary">rpsC</name>
    <name type="ordered locus">Csal_0427</name>
</gene>
<reference key="1">
    <citation type="journal article" date="2011" name="Stand. Genomic Sci.">
        <title>Complete genome sequence of the halophilic and highly halotolerant Chromohalobacter salexigens type strain (1H11(T)).</title>
        <authorList>
            <person name="Copeland A."/>
            <person name="O'Connor K."/>
            <person name="Lucas S."/>
            <person name="Lapidus A."/>
            <person name="Berry K.W."/>
            <person name="Detter J.C."/>
            <person name="Del Rio T.G."/>
            <person name="Hammon N."/>
            <person name="Dalin E."/>
            <person name="Tice H."/>
            <person name="Pitluck S."/>
            <person name="Bruce D."/>
            <person name="Goodwin L."/>
            <person name="Han C."/>
            <person name="Tapia R."/>
            <person name="Saunders E."/>
            <person name="Schmutz J."/>
            <person name="Brettin T."/>
            <person name="Larimer F."/>
            <person name="Land M."/>
            <person name="Hauser L."/>
            <person name="Vargas C."/>
            <person name="Nieto J.J."/>
            <person name="Kyrpides N.C."/>
            <person name="Ivanova N."/>
            <person name="Goker M."/>
            <person name="Klenk H.P."/>
            <person name="Csonka L.N."/>
            <person name="Woyke T."/>
        </authorList>
    </citation>
    <scope>NUCLEOTIDE SEQUENCE [LARGE SCALE GENOMIC DNA]</scope>
    <source>
        <strain>ATCC BAA-138 / DSM 3043 / CIP 106854 / NCIMB 13768 / 1H11</strain>
    </source>
</reference>
<accession>Q1R0G9</accession>
<feature type="chain" id="PRO_0000293773" description="Small ribosomal subunit protein uS3">
    <location>
        <begin position="1"/>
        <end position="232"/>
    </location>
</feature>
<feature type="domain" description="KH type-2" evidence="1">
    <location>
        <begin position="39"/>
        <end position="107"/>
    </location>
</feature>
<organism>
    <name type="scientific">Chromohalobacter salexigens (strain ATCC BAA-138 / DSM 3043 / CIP 106854 / NCIMB 13768 / 1H11)</name>
    <dbReference type="NCBI Taxonomy" id="290398"/>
    <lineage>
        <taxon>Bacteria</taxon>
        <taxon>Pseudomonadati</taxon>
        <taxon>Pseudomonadota</taxon>
        <taxon>Gammaproteobacteria</taxon>
        <taxon>Oceanospirillales</taxon>
        <taxon>Halomonadaceae</taxon>
        <taxon>Chromohalobacter</taxon>
    </lineage>
</organism>
<name>RS3_CHRSD</name>
<comment type="function">
    <text evidence="1">Binds the lower part of the 30S subunit head. Binds mRNA in the 70S ribosome, positioning it for translation.</text>
</comment>
<comment type="subunit">
    <text evidence="1">Part of the 30S ribosomal subunit. Forms a tight complex with proteins S10 and S14.</text>
</comment>
<comment type="similarity">
    <text evidence="1">Belongs to the universal ribosomal protein uS3 family.</text>
</comment>
<dbReference type="EMBL" id="CP000285">
    <property type="protein sequence ID" value="ABE57789.1"/>
    <property type="molecule type" value="Genomic_DNA"/>
</dbReference>
<dbReference type="RefSeq" id="WP_011505735.1">
    <property type="nucleotide sequence ID" value="NC_007963.1"/>
</dbReference>
<dbReference type="SMR" id="Q1R0G9"/>
<dbReference type="STRING" id="290398.Csal_0427"/>
<dbReference type="GeneID" id="95333180"/>
<dbReference type="KEGG" id="csa:Csal_0427"/>
<dbReference type="eggNOG" id="COG0092">
    <property type="taxonomic scope" value="Bacteria"/>
</dbReference>
<dbReference type="HOGENOM" id="CLU_058591_0_2_6"/>
<dbReference type="OrthoDB" id="9806396at2"/>
<dbReference type="Proteomes" id="UP000000239">
    <property type="component" value="Chromosome"/>
</dbReference>
<dbReference type="GO" id="GO:0022627">
    <property type="term" value="C:cytosolic small ribosomal subunit"/>
    <property type="evidence" value="ECO:0007669"/>
    <property type="project" value="TreeGrafter"/>
</dbReference>
<dbReference type="GO" id="GO:0003729">
    <property type="term" value="F:mRNA binding"/>
    <property type="evidence" value="ECO:0007669"/>
    <property type="project" value="UniProtKB-UniRule"/>
</dbReference>
<dbReference type="GO" id="GO:0019843">
    <property type="term" value="F:rRNA binding"/>
    <property type="evidence" value="ECO:0007669"/>
    <property type="project" value="UniProtKB-UniRule"/>
</dbReference>
<dbReference type="GO" id="GO:0003735">
    <property type="term" value="F:structural constituent of ribosome"/>
    <property type="evidence" value="ECO:0007669"/>
    <property type="project" value="InterPro"/>
</dbReference>
<dbReference type="GO" id="GO:0006412">
    <property type="term" value="P:translation"/>
    <property type="evidence" value="ECO:0007669"/>
    <property type="project" value="UniProtKB-UniRule"/>
</dbReference>
<dbReference type="CDD" id="cd02412">
    <property type="entry name" value="KH-II_30S_S3"/>
    <property type="match status" value="1"/>
</dbReference>
<dbReference type="FunFam" id="3.30.1140.32:FF:000001">
    <property type="entry name" value="30S ribosomal protein S3"/>
    <property type="match status" value="1"/>
</dbReference>
<dbReference type="FunFam" id="3.30.300.20:FF:000001">
    <property type="entry name" value="30S ribosomal protein S3"/>
    <property type="match status" value="1"/>
</dbReference>
<dbReference type="Gene3D" id="3.30.300.20">
    <property type="match status" value="1"/>
</dbReference>
<dbReference type="Gene3D" id="3.30.1140.32">
    <property type="entry name" value="Ribosomal protein S3, C-terminal domain"/>
    <property type="match status" value="1"/>
</dbReference>
<dbReference type="HAMAP" id="MF_01309_B">
    <property type="entry name" value="Ribosomal_uS3_B"/>
    <property type="match status" value="1"/>
</dbReference>
<dbReference type="InterPro" id="IPR004087">
    <property type="entry name" value="KH_dom"/>
</dbReference>
<dbReference type="InterPro" id="IPR015946">
    <property type="entry name" value="KH_dom-like_a/b"/>
</dbReference>
<dbReference type="InterPro" id="IPR004044">
    <property type="entry name" value="KH_dom_type_2"/>
</dbReference>
<dbReference type="InterPro" id="IPR009019">
    <property type="entry name" value="KH_sf_prok-type"/>
</dbReference>
<dbReference type="InterPro" id="IPR036419">
    <property type="entry name" value="Ribosomal_S3_C_sf"/>
</dbReference>
<dbReference type="InterPro" id="IPR005704">
    <property type="entry name" value="Ribosomal_uS3_bac-typ"/>
</dbReference>
<dbReference type="InterPro" id="IPR001351">
    <property type="entry name" value="Ribosomal_uS3_C"/>
</dbReference>
<dbReference type="InterPro" id="IPR018280">
    <property type="entry name" value="Ribosomal_uS3_CS"/>
</dbReference>
<dbReference type="NCBIfam" id="TIGR01009">
    <property type="entry name" value="rpsC_bact"/>
    <property type="match status" value="1"/>
</dbReference>
<dbReference type="PANTHER" id="PTHR11760">
    <property type="entry name" value="30S/40S RIBOSOMAL PROTEIN S3"/>
    <property type="match status" value="1"/>
</dbReference>
<dbReference type="PANTHER" id="PTHR11760:SF19">
    <property type="entry name" value="SMALL RIBOSOMAL SUBUNIT PROTEIN US3C"/>
    <property type="match status" value="1"/>
</dbReference>
<dbReference type="Pfam" id="PF07650">
    <property type="entry name" value="KH_2"/>
    <property type="match status" value="1"/>
</dbReference>
<dbReference type="Pfam" id="PF00189">
    <property type="entry name" value="Ribosomal_S3_C"/>
    <property type="match status" value="1"/>
</dbReference>
<dbReference type="SMART" id="SM00322">
    <property type="entry name" value="KH"/>
    <property type="match status" value="1"/>
</dbReference>
<dbReference type="SUPFAM" id="SSF54814">
    <property type="entry name" value="Prokaryotic type KH domain (KH-domain type II)"/>
    <property type="match status" value="1"/>
</dbReference>
<dbReference type="SUPFAM" id="SSF54821">
    <property type="entry name" value="Ribosomal protein S3 C-terminal domain"/>
    <property type="match status" value="1"/>
</dbReference>
<dbReference type="PROSITE" id="PS50823">
    <property type="entry name" value="KH_TYPE_2"/>
    <property type="match status" value="1"/>
</dbReference>
<dbReference type="PROSITE" id="PS00548">
    <property type="entry name" value="RIBOSOMAL_S3"/>
    <property type="match status" value="1"/>
</dbReference>
<sequence length="232" mass="26056">MGQKVNPTGIRLGIVKDHRSVWYAERGAYADKLNNDLEVRRFLEQRLKNASVSDITIERPANNARITIHTARPGIVIGKKGEDVDRLRRDVSEMMGVPVHVNIEEVRKPELDAQLVAQNVCGQLERRVMFRRAMKRAVQNAMRLGAGGIKIQLSGRLGGAEIARTEWYREGRVPLHTLRADIDYATYEAHTTYGVIGVKVWVFKGEILGGIEEVRAKQKQAQAPAPKKKGSR</sequence>
<keyword id="KW-1185">Reference proteome</keyword>
<keyword id="KW-0687">Ribonucleoprotein</keyword>
<keyword id="KW-0689">Ribosomal protein</keyword>
<keyword id="KW-0694">RNA-binding</keyword>
<keyword id="KW-0699">rRNA-binding</keyword>
<proteinExistence type="inferred from homology"/>